<name>FBPAP_THET2</name>
<protein>
    <recommendedName>
        <fullName evidence="4">Fructose-1,6-bisphosphate aldolase/phosphatase</fullName>
        <shortName evidence="2">FBP A/P</shortName>
        <shortName evidence="4">FBP aldolase/phosphatase</shortName>
        <ecNumber evidence="3">3.1.3.11</ecNumber>
        <ecNumber evidence="3">4.1.2.13</ecNumber>
    </recommendedName>
</protein>
<feature type="chain" id="PRO_0000437178" description="Fructose-1,6-bisphosphate aldolase/phosphatase">
    <location>
        <begin position="1"/>
        <end position="363"/>
    </location>
</feature>
<feature type="active site" description="Proton acceptor; for FBP phosphatase activity" evidence="1">
    <location>
        <position position="11"/>
    </location>
</feature>
<feature type="active site" description="Proton donor/acceptor; for FBP aldolase activity" evidence="1">
    <location>
        <position position="230"/>
    </location>
</feature>
<feature type="active site" description="Schiff-base intermediate with DHAP; for FBP aldolase activity" evidence="1">
    <location>
        <position position="233"/>
    </location>
</feature>
<feature type="binding site" evidence="1">
    <location>
        <position position="11"/>
    </location>
    <ligand>
        <name>Mg(2+)</name>
        <dbReference type="ChEBI" id="CHEBI:18420"/>
        <label>1</label>
    </ligand>
</feature>
<feature type="binding site" description="in other chain" evidence="1">
    <location>
        <position position="18"/>
    </location>
    <ligand>
        <name>beta-D-fructose 1,6-bisphosphate</name>
        <dbReference type="ChEBI" id="CHEBI:32966"/>
        <note>ligand shared between dimeric partners</note>
    </ligand>
</feature>
<feature type="binding site" evidence="1">
    <location>
        <position position="18"/>
    </location>
    <ligand>
        <name>dihydroxyacetone phosphate</name>
        <dbReference type="ChEBI" id="CHEBI:57642"/>
    </ligand>
</feature>
<feature type="binding site" evidence="1">
    <location>
        <position position="18"/>
    </location>
    <ligand>
        <name>Mg(2+)</name>
        <dbReference type="ChEBI" id="CHEBI:18420"/>
        <label>1</label>
    </ligand>
</feature>
<feature type="binding site" evidence="1">
    <location>
        <position position="51"/>
    </location>
    <ligand>
        <name>Mg(2+)</name>
        <dbReference type="ChEBI" id="CHEBI:18420"/>
        <label>1</label>
    </ligand>
</feature>
<feature type="binding site" evidence="1">
    <location>
        <position position="51"/>
    </location>
    <ligand>
        <name>Mg(2+)</name>
        <dbReference type="ChEBI" id="CHEBI:18420"/>
        <label>2</label>
    </ligand>
</feature>
<feature type="binding site" evidence="1">
    <location>
        <position position="52"/>
    </location>
    <ligand>
        <name>Mg(2+)</name>
        <dbReference type="ChEBI" id="CHEBI:18420"/>
        <label>2</label>
    </ligand>
</feature>
<feature type="binding site" description="in other chain" evidence="1">
    <location>
        <position position="89"/>
    </location>
    <ligand>
        <name>beta-D-fructose 1,6-bisphosphate</name>
        <dbReference type="ChEBI" id="CHEBI:32966"/>
        <note>ligand shared between dimeric partners</note>
    </ligand>
</feature>
<feature type="binding site" evidence="1">
    <location>
        <position position="93"/>
    </location>
    <ligand>
        <name>Mg(2+)</name>
        <dbReference type="ChEBI" id="CHEBI:18420"/>
        <label>1</label>
    </ligand>
</feature>
<feature type="binding site" description="in other chain" evidence="1">
    <location>
        <begin position="102"/>
        <end position="103"/>
    </location>
    <ligand>
        <name>beta-D-fructose 1,6-bisphosphate</name>
        <dbReference type="ChEBI" id="CHEBI:32966"/>
        <note>ligand shared between dimeric partners</note>
    </ligand>
</feature>
<feature type="binding site" evidence="1">
    <location>
        <position position="130"/>
    </location>
    <ligand>
        <name>Mg(2+)</name>
        <dbReference type="ChEBI" id="CHEBI:18420"/>
        <label>2</label>
    </ligand>
</feature>
<feature type="binding site" description="in other chain" evidence="1">
    <location>
        <position position="131"/>
    </location>
    <ligand>
        <name>beta-D-fructose 1,6-bisphosphate</name>
        <dbReference type="ChEBI" id="CHEBI:32966"/>
        <note>ligand shared between dimeric partners</note>
    </ligand>
</feature>
<feature type="binding site" evidence="1">
    <location>
        <position position="131"/>
    </location>
    <ligand>
        <name>dihydroxyacetone phosphate</name>
        <dbReference type="ChEBI" id="CHEBI:57642"/>
    </ligand>
</feature>
<feature type="binding site" evidence="1">
    <location>
        <position position="233"/>
    </location>
    <ligand>
        <name>Mg(2+)</name>
        <dbReference type="ChEBI" id="CHEBI:18420"/>
        <label>3</label>
    </ligand>
</feature>
<feature type="binding site" evidence="1">
    <location>
        <position position="234"/>
    </location>
    <ligand>
        <name>Mg(2+)</name>
        <dbReference type="ChEBI" id="CHEBI:18420"/>
        <label>3</label>
    </ligand>
</feature>
<feature type="binding site" evidence="1">
    <location>
        <position position="234"/>
    </location>
    <ligand>
        <name>Mg(2+)</name>
        <dbReference type="ChEBI" id="CHEBI:18420"/>
        <label>4</label>
    </ligand>
</feature>
<feature type="binding site" evidence="1">
    <location>
        <position position="235"/>
    </location>
    <ligand>
        <name>Mg(2+)</name>
        <dbReference type="ChEBI" id="CHEBI:18420"/>
        <label>2</label>
    </ligand>
</feature>
<feature type="binding site" evidence="1">
    <location>
        <position position="235"/>
    </location>
    <ligand>
        <name>Mg(2+)</name>
        <dbReference type="ChEBI" id="CHEBI:18420"/>
        <label>3</label>
    </ligand>
</feature>
<feature type="binding site" evidence="1">
    <location>
        <begin position="243"/>
        <end position="244"/>
    </location>
    <ligand>
        <name>beta-D-fructose 1,6-bisphosphate</name>
        <dbReference type="ChEBI" id="CHEBI:32966"/>
        <note>ligand shared between dimeric partners</note>
    </ligand>
</feature>
<feature type="binding site" description="in other chain" evidence="1">
    <location>
        <position position="267"/>
    </location>
    <ligand>
        <name>beta-D-fructose 1,6-bisphosphate</name>
        <dbReference type="ChEBI" id="CHEBI:32966"/>
        <note>ligand shared between dimeric partners</note>
    </ligand>
</feature>
<feature type="binding site" evidence="1">
    <location>
        <position position="267"/>
    </location>
    <ligand>
        <name>dihydroxyacetone phosphate</name>
        <dbReference type="ChEBI" id="CHEBI:57642"/>
    </ligand>
</feature>
<feature type="binding site" description="in other chain" evidence="1">
    <location>
        <position position="348"/>
    </location>
    <ligand>
        <name>beta-D-fructose 1,6-bisphosphate</name>
        <dbReference type="ChEBI" id="CHEBI:32966"/>
        <note>ligand shared between dimeric partners</note>
    </ligand>
</feature>
<comment type="function">
    <text evidence="3">Catalyzes two subsequent steps in gluconeogenesis: the aldol condensation of dihydroxyacetone phosphate (DHAP) and glyceraldehyde-3-phosphate (GA3P) to fructose-1,6-bisphosphate (FBP), and the dephosphorylation of FBP to fructose-6-phosphate (F6P).</text>
</comment>
<comment type="catalytic activity">
    <reaction evidence="3">
        <text>beta-D-fructose 1,6-bisphosphate + H2O = beta-D-fructose 6-phosphate + phosphate</text>
        <dbReference type="Rhea" id="RHEA:11064"/>
        <dbReference type="ChEBI" id="CHEBI:15377"/>
        <dbReference type="ChEBI" id="CHEBI:32966"/>
        <dbReference type="ChEBI" id="CHEBI:43474"/>
        <dbReference type="ChEBI" id="CHEBI:57634"/>
        <dbReference type="EC" id="3.1.3.11"/>
    </reaction>
</comment>
<comment type="catalytic activity">
    <reaction evidence="3">
        <text>beta-D-fructose 1,6-bisphosphate = D-glyceraldehyde 3-phosphate + dihydroxyacetone phosphate</text>
        <dbReference type="Rhea" id="RHEA:14729"/>
        <dbReference type="ChEBI" id="CHEBI:32966"/>
        <dbReference type="ChEBI" id="CHEBI:57642"/>
        <dbReference type="ChEBI" id="CHEBI:59776"/>
        <dbReference type="EC" id="4.1.2.13"/>
    </reaction>
</comment>
<comment type="cofactor">
    <cofactor evidence="1">
        <name>Mg(2+)</name>
        <dbReference type="ChEBI" id="CHEBI:18420"/>
    </cofactor>
</comment>
<comment type="pathway">
    <text evidence="6">Carbohydrate biosynthesis; gluconeogenesis.</text>
</comment>
<comment type="subunit">
    <text evidence="1">Homooctamer; dimer of tetramers.</text>
</comment>
<comment type="domain">
    <text evidence="1">Consists of a single catalytic domain, but remodels its active-site architecture via a large structural change to exhibit dual activities.</text>
</comment>
<comment type="similarity">
    <text evidence="2 5">Belongs to the FBP aldolase/phosphatase family.</text>
</comment>
<accession>Q72K02</accession>
<organism>
    <name type="scientific">Thermus thermophilus (strain ATCC BAA-163 / DSM 7039 / HB27)</name>
    <dbReference type="NCBI Taxonomy" id="262724"/>
    <lineage>
        <taxon>Bacteria</taxon>
        <taxon>Thermotogati</taxon>
        <taxon>Deinococcota</taxon>
        <taxon>Deinococci</taxon>
        <taxon>Thermales</taxon>
        <taxon>Thermaceae</taxon>
        <taxon>Thermus</taxon>
    </lineage>
</organism>
<sequence length="363" mass="40389">MKVTLSVLKADIGSVGGHTLPSRKVLAKVEEVVREEVGRLLLDAYVFHIGDDIVLLLSHTRGVRNQEVHALAWKAFREGTEVARAEGLYGAGQDLLKDAFTGNLHGLGPQVAEMEFTERPAEPFMVLAADKTEPGAFNLPLYLAFADPMYSSGLLLSPELRPGFRFRIMDLAQTERDSYIELDAPERLYDIATLLRDSHRFAIESIWSRKHGEQAAVVSTTRLRNIAGRYVGKDDPVAIVRTQKIFPATEEFGPVFALAPYVAGDTRGSHHMPLMPVRANTPASTFFCVPMVCGLAFSLREGRLSEPVDLFADPVWEAVRAKVVEKAQEMRRQGFYGPAMLPMEELEYTGIAERLKALEREFS</sequence>
<keyword id="KW-0119">Carbohydrate metabolism</keyword>
<keyword id="KW-0312">Gluconeogenesis</keyword>
<keyword id="KW-0378">Hydrolase</keyword>
<keyword id="KW-0456">Lyase</keyword>
<keyword id="KW-0460">Magnesium</keyword>
<keyword id="KW-0479">Metal-binding</keyword>
<keyword id="KW-0560">Oxidoreductase</keyword>
<keyword id="KW-0704">Schiff base</keyword>
<evidence type="ECO:0000250" key="1">
    <source>
        <dbReference type="UniProtKB" id="F9VMT6"/>
    </source>
</evidence>
<evidence type="ECO:0000255" key="2">
    <source>
        <dbReference type="HAMAP-Rule" id="MF_02067"/>
    </source>
</evidence>
<evidence type="ECO:0000269" key="3">
    <source>
    </source>
</evidence>
<evidence type="ECO:0000303" key="4">
    <source>
    </source>
</evidence>
<evidence type="ECO:0000305" key="5"/>
<evidence type="ECO:0000305" key="6">
    <source>
    </source>
</evidence>
<evidence type="ECO:0000312" key="7">
    <source>
        <dbReference type="EMBL" id="AAS80964.1"/>
    </source>
</evidence>
<gene>
    <name evidence="2" type="primary">fbp</name>
    <name evidence="7" type="ordered locus">TT_C0616</name>
</gene>
<proteinExistence type="evidence at protein level"/>
<dbReference type="EC" id="3.1.3.11" evidence="3"/>
<dbReference type="EC" id="4.1.2.13" evidence="3"/>
<dbReference type="EMBL" id="AE017221">
    <property type="protein sequence ID" value="AAS80964.1"/>
    <property type="molecule type" value="Genomic_DNA"/>
</dbReference>
<dbReference type="RefSeq" id="WP_011173061.1">
    <property type="nucleotide sequence ID" value="NC_005835.1"/>
</dbReference>
<dbReference type="SMR" id="Q72K02"/>
<dbReference type="KEGG" id="tth:TT_C0616"/>
<dbReference type="eggNOG" id="COG1980">
    <property type="taxonomic scope" value="Bacteria"/>
</dbReference>
<dbReference type="HOGENOM" id="CLU_041630_0_0_0"/>
<dbReference type="OrthoDB" id="9763541at2"/>
<dbReference type="UniPathway" id="UPA00138"/>
<dbReference type="Proteomes" id="UP000000592">
    <property type="component" value="Chromosome"/>
</dbReference>
<dbReference type="GO" id="GO:0042132">
    <property type="term" value="F:fructose 1,6-bisphosphate 1-phosphatase activity"/>
    <property type="evidence" value="ECO:0007669"/>
    <property type="project" value="UniProtKB-UniRule"/>
</dbReference>
<dbReference type="GO" id="GO:0004332">
    <property type="term" value="F:fructose-bisphosphate aldolase activity"/>
    <property type="evidence" value="ECO:0007669"/>
    <property type="project" value="UniProtKB-UniRule"/>
</dbReference>
<dbReference type="GO" id="GO:0000287">
    <property type="term" value="F:magnesium ion binding"/>
    <property type="evidence" value="ECO:0007669"/>
    <property type="project" value="UniProtKB-UniRule"/>
</dbReference>
<dbReference type="GO" id="GO:0016491">
    <property type="term" value="F:oxidoreductase activity"/>
    <property type="evidence" value="ECO:0007669"/>
    <property type="project" value="UniProtKB-KW"/>
</dbReference>
<dbReference type="GO" id="GO:0006094">
    <property type="term" value="P:gluconeogenesis"/>
    <property type="evidence" value="ECO:0007669"/>
    <property type="project" value="UniProtKB-UniRule"/>
</dbReference>
<dbReference type="HAMAP" id="MF_02067">
    <property type="entry name" value="FBP_aldolase_phosphatase"/>
    <property type="match status" value="1"/>
</dbReference>
<dbReference type="InterPro" id="IPR002803">
    <property type="entry name" value="FBPase_V"/>
</dbReference>
<dbReference type="InterPro" id="IPR036076">
    <property type="entry name" value="FBPase_V_sf"/>
</dbReference>
<dbReference type="NCBIfam" id="NF041126">
    <property type="entry name" value="FBP_aldo_phos"/>
    <property type="match status" value="1"/>
</dbReference>
<dbReference type="PANTHER" id="PTHR38341">
    <property type="entry name" value="FRUCTOSE-1,6-BISPHOSPHATE ALDOLASE/PHOSPHATASE"/>
    <property type="match status" value="1"/>
</dbReference>
<dbReference type="PANTHER" id="PTHR38341:SF1">
    <property type="entry name" value="FRUCTOSE-1,6-BISPHOSPHATE ALDOLASE_PHOSPHATASE"/>
    <property type="match status" value="1"/>
</dbReference>
<dbReference type="Pfam" id="PF01950">
    <property type="entry name" value="FBPase_3"/>
    <property type="match status" value="1"/>
</dbReference>
<dbReference type="PIRSF" id="PIRSF015647">
    <property type="entry name" value="FBPtase_archl"/>
    <property type="match status" value="1"/>
</dbReference>
<dbReference type="SUPFAM" id="SSF111249">
    <property type="entry name" value="Sulfolobus fructose-1,6-bisphosphatase-like"/>
    <property type="match status" value="1"/>
</dbReference>
<reference key="1">
    <citation type="journal article" date="2004" name="Nat. Biotechnol.">
        <title>The genome sequence of the extreme thermophile Thermus thermophilus.</title>
        <authorList>
            <person name="Henne A."/>
            <person name="Brueggemann H."/>
            <person name="Raasch C."/>
            <person name="Wiezer A."/>
            <person name="Hartsch T."/>
            <person name="Liesegang H."/>
            <person name="Johann A."/>
            <person name="Lienard T."/>
            <person name="Gohl O."/>
            <person name="Martinez-Arias R."/>
            <person name="Jacobi C."/>
            <person name="Starkuviene V."/>
            <person name="Schlenczeck S."/>
            <person name="Dencker S."/>
            <person name="Huber R."/>
            <person name="Klenk H.-P."/>
            <person name="Kramer W."/>
            <person name="Merkl R."/>
            <person name="Gottschalk G."/>
            <person name="Fritz H.-J."/>
        </authorList>
    </citation>
    <scope>NUCLEOTIDE SEQUENCE [LARGE SCALE GENOMIC DNA]</scope>
    <source>
        <strain>ATCC BAA-163 / DSM 7039 / HB27</strain>
    </source>
</reference>
<reference key="2">
    <citation type="journal article" date="2010" name="Nature">
        <title>Fructose 1,6-bisphosphate aldolase/phosphatase may be an ancestral gluconeogenic enzyme.</title>
        <authorList>
            <person name="Say R.F."/>
            <person name="Fuchs G."/>
        </authorList>
    </citation>
    <scope>FUNCTION AS BOTH FBPASE AND FBP ALDOLASE</scope>
    <scope>CATALYTIC ACTIVITY</scope>
    <scope>PATHWAY</scope>
    <source>
        <strain>ATCC BAA-163 / DSM 7039 / HB27</strain>
    </source>
</reference>